<keyword id="KW-0007">Acetylation</keyword>
<keyword id="KW-1185">Reference proteome</keyword>
<dbReference type="EMBL" id="CP000468">
    <property type="protein sequence ID" value="ABJ00452.1"/>
    <property type="molecule type" value="Genomic_DNA"/>
</dbReference>
<dbReference type="RefSeq" id="WP_000877109.1">
    <property type="nucleotide sequence ID" value="NZ_CADILS010000019.1"/>
</dbReference>
<dbReference type="SMR" id="A1A9W2"/>
<dbReference type="KEGG" id="ecv:APECO1_149"/>
<dbReference type="HOGENOM" id="CLU_057831_2_0_6"/>
<dbReference type="Proteomes" id="UP000008216">
    <property type="component" value="Chromosome"/>
</dbReference>
<dbReference type="FunFam" id="1.10.10.10:FF:000196">
    <property type="entry name" value="UPF0502 protein YceH"/>
    <property type="match status" value="1"/>
</dbReference>
<dbReference type="FunFam" id="1.10.10.10:FF:000241">
    <property type="entry name" value="UPF0502 protein YceH"/>
    <property type="match status" value="1"/>
</dbReference>
<dbReference type="Gene3D" id="1.10.10.10">
    <property type="entry name" value="Winged helix-like DNA-binding domain superfamily/Winged helix DNA-binding domain"/>
    <property type="match status" value="2"/>
</dbReference>
<dbReference type="HAMAP" id="MF_01584">
    <property type="entry name" value="UPF0502"/>
    <property type="match status" value="1"/>
</dbReference>
<dbReference type="InterPro" id="IPR007432">
    <property type="entry name" value="DUF480"/>
</dbReference>
<dbReference type="InterPro" id="IPR036388">
    <property type="entry name" value="WH-like_DNA-bd_sf"/>
</dbReference>
<dbReference type="InterPro" id="IPR036390">
    <property type="entry name" value="WH_DNA-bd_sf"/>
</dbReference>
<dbReference type="NCBIfam" id="NF008413">
    <property type="entry name" value="PRK11239.1"/>
    <property type="match status" value="1"/>
</dbReference>
<dbReference type="PANTHER" id="PTHR38768">
    <property type="entry name" value="UPF0502 PROTEIN YCEH"/>
    <property type="match status" value="1"/>
</dbReference>
<dbReference type="PANTHER" id="PTHR38768:SF1">
    <property type="entry name" value="UPF0502 PROTEIN YCEH"/>
    <property type="match status" value="1"/>
</dbReference>
<dbReference type="Pfam" id="PF04337">
    <property type="entry name" value="DUF480"/>
    <property type="match status" value="1"/>
</dbReference>
<dbReference type="SUPFAM" id="SSF46785">
    <property type="entry name" value="Winged helix' DNA-binding domain"/>
    <property type="match status" value="2"/>
</dbReference>
<accession>A1A9W2</accession>
<proteinExistence type="inferred from homology"/>
<reference key="1">
    <citation type="journal article" date="2007" name="J. Bacteriol.">
        <title>The genome sequence of avian pathogenic Escherichia coli strain O1:K1:H7 shares strong similarities with human extraintestinal pathogenic E. coli genomes.</title>
        <authorList>
            <person name="Johnson T.J."/>
            <person name="Kariyawasam S."/>
            <person name="Wannemuehler Y."/>
            <person name="Mangiamele P."/>
            <person name="Johnson S.J."/>
            <person name="Doetkott C."/>
            <person name="Skyberg J.A."/>
            <person name="Lynne A.M."/>
            <person name="Johnson J.R."/>
            <person name="Nolan L.K."/>
        </authorList>
    </citation>
    <scope>NUCLEOTIDE SEQUENCE [LARGE SCALE GENOMIC DNA]</scope>
</reference>
<comment type="similarity">
    <text evidence="1">Belongs to the UPF0502 family.</text>
</comment>
<gene>
    <name evidence="1" type="primary">yceH</name>
    <name type="ordered locus">Ecok1_09580</name>
    <name type="ORF">APECO1_149</name>
</gene>
<sequence length="215" mass="24180">MKYQLTALEARVIGCLLEKQVTTPEQYPLSVNGVVTACNQKTNREPVMNLSESEVQEQLDNLVKRHYLRTVSGFGNRVTKYEQRFCNSEFGDLKLSAAEVALITTLLLRGAQTPGELRSRAARMYEFSDMAEVESTLEQLANREDGPFVVRLAREPGKRESRYMHLFSGEVEDQPAVMDMSNAVDGDLQARVEALEIEVAELKQRLDSLLAHLGD</sequence>
<evidence type="ECO:0000255" key="1">
    <source>
        <dbReference type="HAMAP-Rule" id="MF_01584"/>
    </source>
</evidence>
<name>YCEH_ECOK1</name>
<organism>
    <name type="scientific">Escherichia coli O1:K1 / APEC</name>
    <dbReference type="NCBI Taxonomy" id="405955"/>
    <lineage>
        <taxon>Bacteria</taxon>
        <taxon>Pseudomonadati</taxon>
        <taxon>Pseudomonadota</taxon>
        <taxon>Gammaproteobacteria</taxon>
        <taxon>Enterobacterales</taxon>
        <taxon>Enterobacteriaceae</taxon>
        <taxon>Escherichia</taxon>
    </lineage>
</organism>
<protein>
    <recommendedName>
        <fullName evidence="1">UPF0502 protein YceH</fullName>
    </recommendedName>
</protein>
<feature type="chain" id="PRO_0000309387" description="UPF0502 protein YceH">
    <location>
        <begin position="1"/>
        <end position="215"/>
    </location>
</feature>
<feature type="modified residue" description="N6-acetyllysine" evidence="1">
    <location>
        <position position="80"/>
    </location>
</feature>